<organism>
    <name type="scientific">Salmonella paratyphi A (strain ATCC 9150 / SARB42)</name>
    <dbReference type="NCBI Taxonomy" id="295319"/>
    <lineage>
        <taxon>Bacteria</taxon>
        <taxon>Pseudomonadati</taxon>
        <taxon>Pseudomonadota</taxon>
        <taxon>Gammaproteobacteria</taxon>
        <taxon>Enterobacterales</taxon>
        <taxon>Enterobacteriaceae</taxon>
        <taxon>Salmonella</taxon>
    </lineage>
</organism>
<feature type="chain" id="PRO_0000214453" description="Cell division protein FtsB">
    <location>
        <begin position="1"/>
        <end position="103"/>
    </location>
</feature>
<feature type="topological domain" description="Cytoplasmic" evidence="1">
    <location>
        <begin position="1"/>
        <end position="3"/>
    </location>
</feature>
<feature type="transmembrane region" description="Helical" evidence="1">
    <location>
        <begin position="4"/>
        <end position="21"/>
    </location>
</feature>
<feature type="topological domain" description="Periplasmic" evidence="1">
    <location>
        <begin position="22"/>
        <end position="103"/>
    </location>
</feature>
<feature type="coiled-coil region" evidence="1">
    <location>
        <begin position="33"/>
        <end position="62"/>
    </location>
</feature>
<protein>
    <recommendedName>
        <fullName evidence="1">Cell division protein FtsB</fullName>
    </recommendedName>
</protein>
<reference key="1">
    <citation type="journal article" date="2004" name="Nat. Genet.">
        <title>Comparison of genome degradation in Paratyphi A and Typhi, human-restricted serovars of Salmonella enterica that cause typhoid.</title>
        <authorList>
            <person name="McClelland M."/>
            <person name="Sanderson K.E."/>
            <person name="Clifton S.W."/>
            <person name="Latreille P."/>
            <person name="Porwollik S."/>
            <person name="Sabo A."/>
            <person name="Meyer R."/>
            <person name="Bieri T."/>
            <person name="Ozersky P."/>
            <person name="McLellan M."/>
            <person name="Harkins C.R."/>
            <person name="Wang C."/>
            <person name="Nguyen C."/>
            <person name="Berghoff A."/>
            <person name="Elliott G."/>
            <person name="Kohlberg S."/>
            <person name="Strong C."/>
            <person name="Du F."/>
            <person name="Carter J."/>
            <person name="Kremizki C."/>
            <person name="Layman D."/>
            <person name="Leonard S."/>
            <person name="Sun H."/>
            <person name="Fulton L."/>
            <person name="Nash W."/>
            <person name="Miner T."/>
            <person name="Minx P."/>
            <person name="Delehaunty K."/>
            <person name="Fronick C."/>
            <person name="Magrini V."/>
            <person name="Nhan M."/>
            <person name="Warren W."/>
            <person name="Florea L."/>
            <person name="Spieth J."/>
            <person name="Wilson R.K."/>
        </authorList>
    </citation>
    <scope>NUCLEOTIDE SEQUENCE [LARGE SCALE GENOMIC DNA]</scope>
    <source>
        <strain>ATCC 9150 / SARB42</strain>
    </source>
</reference>
<keyword id="KW-0131">Cell cycle</keyword>
<keyword id="KW-0132">Cell division</keyword>
<keyword id="KW-0997">Cell inner membrane</keyword>
<keyword id="KW-1003">Cell membrane</keyword>
<keyword id="KW-0175">Coiled coil</keyword>
<keyword id="KW-0472">Membrane</keyword>
<keyword id="KW-0812">Transmembrane</keyword>
<keyword id="KW-1133">Transmembrane helix</keyword>
<proteinExistence type="inferred from homology"/>
<name>FTSB_SALPA</name>
<dbReference type="EMBL" id="CP000026">
    <property type="protein sequence ID" value="AAV78642.1"/>
    <property type="molecule type" value="Genomic_DNA"/>
</dbReference>
<dbReference type="RefSeq" id="WP_000517480.1">
    <property type="nucleotide sequence ID" value="NC_006511.1"/>
</dbReference>
<dbReference type="SMR" id="Q5PEG0"/>
<dbReference type="KEGG" id="spt:SPA2787"/>
<dbReference type="HOGENOM" id="CLU_134863_5_2_6"/>
<dbReference type="Proteomes" id="UP000008185">
    <property type="component" value="Chromosome"/>
</dbReference>
<dbReference type="GO" id="GO:0032153">
    <property type="term" value="C:cell division site"/>
    <property type="evidence" value="ECO:0007669"/>
    <property type="project" value="UniProtKB-UniRule"/>
</dbReference>
<dbReference type="GO" id="GO:0030428">
    <property type="term" value="C:cell septum"/>
    <property type="evidence" value="ECO:0007669"/>
    <property type="project" value="TreeGrafter"/>
</dbReference>
<dbReference type="GO" id="GO:0005886">
    <property type="term" value="C:plasma membrane"/>
    <property type="evidence" value="ECO:0007669"/>
    <property type="project" value="UniProtKB-SubCell"/>
</dbReference>
<dbReference type="GO" id="GO:0043093">
    <property type="term" value="P:FtsZ-dependent cytokinesis"/>
    <property type="evidence" value="ECO:0007669"/>
    <property type="project" value="UniProtKB-UniRule"/>
</dbReference>
<dbReference type="FunFam" id="1.20.5.400:FF:000001">
    <property type="entry name" value="Cell division protein FtsB"/>
    <property type="match status" value="1"/>
</dbReference>
<dbReference type="Gene3D" id="1.20.5.400">
    <property type="match status" value="1"/>
</dbReference>
<dbReference type="HAMAP" id="MF_00599">
    <property type="entry name" value="FtsB"/>
    <property type="match status" value="1"/>
</dbReference>
<dbReference type="InterPro" id="IPR023081">
    <property type="entry name" value="Cell_div_FtsB"/>
</dbReference>
<dbReference type="InterPro" id="IPR007060">
    <property type="entry name" value="FtsL/DivIC"/>
</dbReference>
<dbReference type="NCBIfam" id="NF002058">
    <property type="entry name" value="PRK00888.1"/>
    <property type="match status" value="1"/>
</dbReference>
<dbReference type="PANTHER" id="PTHR37485">
    <property type="entry name" value="CELL DIVISION PROTEIN FTSB"/>
    <property type="match status" value="1"/>
</dbReference>
<dbReference type="PANTHER" id="PTHR37485:SF1">
    <property type="entry name" value="CELL DIVISION PROTEIN FTSB"/>
    <property type="match status" value="1"/>
</dbReference>
<dbReference type="Pfam" id="PF04977">
    <property type="entry name" value="DivIC"/>
    <property type="match status" value="1"/>
</dbReference>
<evidence type="ECO:0000255" key="1">
    <source>
        <dbReference type="HAMAP-Rule" id="MF_00599"/>
    </source>
</evidence>
<gene>
    <name evidence="1" type="primary">ftsB</name>
    <name type="ordered locus">SPA2787</name>
</gene>
<sequence length="103" mass="11575">MGKLTLLLLALLVWLQYSLWFGKNGIHDYSRVNDDVVAQQATNAKLKARNDQLFAEIDDLNGGQEAIEERARNELSMTKPGETFYRLVPDASKRAATAGQTHR</sequence>
<comment type="function">
    <text evidence="1">Essential cell division protein. May link together the upstream cell division proteins, which are predominantly cytoplasmic, with the downstream cell division proteins, which are predominantly periplasmic.</text>
</comment>
<comment type="subunit">
    <text evidence="1">Part of a complex composed of FtsB, FtsL and FtsQ.</text>
</comment>
<comment type="subcellular location">
    <subcellularLocation>
        <location evidence="1">Cell inner membrane</location>
        <topology evidence="1">Single-pass type II membrane protein</topology>
    </subcellularLocation>
    <text evidence="1">Localizes to the division septum.</text>
</comment>
<comment type="similarity">
    <text evidence="1">Belongs to the FtsB family.</text>
</comment>
<accession>Q5PEG0</accession>